<proteinExistence type="inferred from homology"/>
<sequence>MNQLQDKDRELAPLERKFNHFICSFEQFFKSQATASITLLLAAIAAMVIANSQWHEGYEEISHMAFSISLGDFAISHSLHTWVNDGLMVLFFFLLGLEIKYECLVGDLKDFRDSSLVIAMAIGGMLLPAGIYAGVALTGVDEALRGWGIPMATDTAFALGILALLGSKAPRSAAVTLSALAIVDDMGAVAVIGLFYTENIHLTSLMYAGLTLGGLFALNVLGFRRPIFYLVGGILLWWFVLQSGVHATAAGILAALAVPTKPYAQSTWFATNMRSVLNRFEKNDRKDKSILEQQDQHELVEQAQDIAAMTTTPIQRWGHVLNRPVSLIILPIFAFINAGVALPDDLSKIFDSVVFIGVASAMVLGKVIGISVFAWIAVKSGFSRLPNGLAFGHVFALACLAGVGFTMSLFIASLGFAGHPELLAQAKLGILAGSVIAAIIGTTLFLMIKHKVHEEPKDERHNKAGLPQTDQE</sequence>
<reference key="1">
    <citation type="submission" date="2006-06" db="EMBL/GenBank/DDBJ databases">
        <title>Complete sequence of Pseudoalteromonas atlantica T6c.</title>
        <authorList>
            <consortium name="US DOE Joint Genome Institute"/>
            <person name="Copeland A."/>
            <person name="Lucas S."/>
            <person name="Lapidus A."/>
            <person name="Barry K."/>
            <person name="Detter J.C."/>
            <person name="Glavina del Rio T."/>
            <person name="Hammon N."/>
            <person name="Israni S."/>
            <person name="Dalin E."/>
            <person name="Tice H."/>
            <person name="Pitluck S."/>
            <person name="Saunders E."/>
            <person name="Brettin T."/>
            <person name="Bruce D."/>
            <person name="Han C."/>
            <person name="Tapia R."/>
            <person name="Gilna P."/>
            <person name="Schmutz J."/>
            <person name="Larimer F."/>
            <person name="Land M."/>
            <person name="Hauser L."/>
            <person name="Kyrpides N."/>
            <person name="Kim E."/>
            <person name="Karls A.C."/>
            <person name="Bartlett D."/>
            <person name="Higgins B.P."/>
            <person name="Richardson P."/>
        </authorList>
    </citation>
    <scope>NUCLEOTIDE SEQUENCE [LARGE SCALE GENOMIC DNA]</scope>
    <source>
        <strain>T6c / ATCC BAA-1087</strain>
    </source>
</reference>
<dbReference type="EMBL" id="CP000388">
    <property type="protein sequence ID" value="ABG42643.1"/>
    <property type="molecule type" value="Genomic_DNA"/>
</dbReference>
<dbReference type="RefSeq" id="WP_011576836.1">
    <property type="nucleotide sequence ID" value="NC_008228.1"/>
</dbReference>
<dbReference type="SMR" id="Q15N95"/>
<dbReference type="STRING" id="342610.Patl_4144"/>
<dbReference type="KEGG" id="pat:Patl_4144"/>
<dbReference type="eggNOG" id="COG3004">
    <property type="taxonomic scope" value="Bacteria"/>
</dbReference>
<dbReference type="HOGENOM" id="CLU_015803_1_2_6"/>
<dbReference type="OrthoDB" id="9808135at2"/>
<dbReference type="Proteomes" id="UP000001981">
    <property type="component" value="Chromosome"/>
</dbReference>
<dbReference type="GO" id="GO:0005886">
    <property type="term" value="C:plasma membrane"/>
    <property type="evidence" value="ECO:0007669"/>
    <property type="project" value="UniProtKB-SubCell"/>
</dbReference>
<dbReference type="GO" id="GO:0015385">
    <property type="term" value="F:sodium:proton antiporter activity"/>
    <property type="evidence" value="ECO:0007669"/>
    <property type="project" value="TreeGrafter"/>
</dbReference>
<dbReference type="GO" id="GO:0006885">
    <property type="term" value="P:regulation of pH"/>
    <property type="evidence" value="ECO:0007669"/>
    <property type="project" value="InterPro"/>
</dbReference>
<dbReference type="Gene3D" id="1.20.1530.10">
    <property type="entry name" value="Na+/H+ antiporter like domain"/>
    <property type="match status" value="1"/>
</dbReference>
<dbReference type="HAMAP" id="MF_01844">
    <property type="entry name" value="NhaA"/>
    <property type="match status" value="1"/>
</dbReference>
<dbReference type="InterPro" id="IPR023171">
    <property type="entry name" value="Na/H_antiporter_dom_sf"/>
</dbReference>
<dbReference type="InterPro" id="IPR004670">
    <property type="entry name" value="NhaA"/>
</dbReference>
<dbReference type="NCBIfam" id="TIGR00773">
    <property type="entry name" value="NhaA"/>
    <property type="match status" value="1"/>
</dbReference>
<dbReference type="PANTHER" id="PTHR30341:SF0">
    <property type="entry name" value="NA(+)_H(+) ANTIPORTER NHAA"/>
    <property type="match status" value="1"/>
</dbReference>
<dbReference type="PANTHER" id="PTHR30341">
    <property type="entry name" value="SODIUM ION/PROTON ANTIPORTER NHAA-RELATED"/>
    <property type="match status" value="1"/>
</dbReference>
<dbReference type="Pfam" id="PF06965">
    <property type="entry name" value="Na_H_antiport_1"/>
    <property type="match status" value="1"/>
</dbReference>
<name>NHAA1_PSEA6</name>
<accession>Q15N95</accession>
<feature type="chain" id="PRO_0000334365" description="Na(+)/H(+) antiporter NhaA 1">
    <location>
        <begin position="1"/>
        <end position="472"/>
    </location>
</feature>
<feature type="transmembrane region" description="Helical" evidence="1">
    <location>
        <begin position="34"/>
        <end position="54"/>
    </location>
</feature>
<feature type="transmembrane region" description="Helical" evidence="1">
    <location>
        <begin position="86"/>
        <end position="106"/>
    </location>
</feature>
<feature type="transmembrane region" description="Helical" evidence="1">
    <location>
        <begin position="116"/>
        <end position="136"/>
    </location>
</feature>
<feature type="transmembrane region" description="Helical" evidence="1">
    <location>
        <begin position="146"/>
        <end position="166"/>
    </location>
</feature>
<feature type="transmembrane region" description="Helical" evidence="1">
    <location>
        <begin position="175"/>
        <end position="195"/>
    </location>
</feature>
<feature type="transmembrane region" description="Helical" evidence="1">
    <location>
        <begin position="203"/>
        <end position="223"/>
    </location>
</feature>
<feature type="transmembrane region" description="Helical" evidence="1">
    <location>
        <begin position="227"/>
        <end position="247"/>
    </location>
</feature>
<feature type="transmembrane region" description="Helical" evidence="1">
    <location>
        <begin position="324"/>
        <end position="344"/>
    </location>
</feature>
<feature type="transmembrane region" description="Helical" evidence="1">
    <location>
        <begin position="353"/>
        <end position="373"/>
    </location>
</feature>
<feature type="transmembrane region" description="Helical" evidence="1">
    <location>
        <begin position="394"/>
        <end position="414"/>
    </location>
</feature>
<feature type="transmembrane region" description="Helical" evidence="1">
    <location>
        <begin position="428"/>
        <end position="448"/>
    </location>
</feature>
<protein>
    <recommendedName>
        <fullName evidence="1">Na(+)/H(+) antiporter NhaA 1</fullName>
    </recommendedName>
    <alternativeName>
        <fullName evidence="1">Sodium/proton antiporter NhaA 1</fullName>
    </alternativeName>
</protein>
<keyword id="KW-0050">Antiport</keyword>
<keyword id="KW-0997">Cell inner membrane</keyword>
<keyword id="KW-1003">Cell membrane</keyword>
<keyword id="KW-0406">Ion transport</keyword>
<keyword id="KW-0472">Membrane</keyword>
<keyword id="KW-0915">Sodium</keyword>
<keyword id="KW-0739">Sodium transport</keyword>
<keyword id="KW-0812">Transmembrane</keyword>
<keyword id="KW-1133">Transmembrane helix</keyword>
<keyword id="KW-0813">Transport</keyword>
<evidence type="ECO:0000255" key="1">
    <source>
        <dbReference type="HAMAP-Rule" id="MF_01844"/>
    </source>
</evidence>
<gene>
    <name evidence="1" type="primary">nhaA1</name>
    <name type="ordered locus">Patl_4144</name>
</gene>
<comment type="function">
    <text evidence="1">Na(+)/H(+) antiporter that extrudes sodium in exchange for external protons.</text>
</comment>
<comment type="catalytic activity">
    <reaction evidence="1">
        <text>Na(+)(in) + 2 H(+)(out) = Na(+)(out) + 2 H(+)(in)</text>
        <dbReference type="Rhea" id="RHEA:29251"/>
        <dbReference type="ChEBI" id="CHEBI:15378"/>
        <dbReference type="ChEBI" id="CHEBI:29101"/>
    </reaction>
    <physiologicalReaction direction="left-to-right" evidence="1">
        <dbReference type="Rhea" id="RHEA:29252"/>
    </physiologicalReaction>
</comment>
<comment type="subcellular location">
    <subcellularLocation>
        <location evidence="1">Cell inner membrane</location>
        <topology evidence="1">Multi-pass membrane protein</topology>
    </subcellularLocation>
</comment>
<comment type="similarity">
    <text evidence="1">Belongs to the NhaA Na(+)/H(+) (TC 2.A.33) antiporter family.</text>
</comment>
<organism>
    <name type="scientific">Pseudoalteromonas atlantica (strain T6c / ATCC BAA-1087)</name>
    <dbReference type="NCBI Taxonomy" id="3042615"/>
    <lineage>
        <taxon>Bacteria</taxon>
        <taxon>Pseudomonadati</taxon>
        <taxon>Pseudomonadota</taxon>
        <taxon>Gammaproteobacteria</taxon>
        <taxon>Alteromonadales</taxon>
        <taxon>Alteromonadaceae</taxon>
        <taxon>Paraglaciecola</taxon>
    </lineage>
</organism>